<evidence type="ECO:0000255" key="1">
    <source>
        <dbReference type="HAMAP-Rule" id="MF_01209"/>
    </source>
</evidence>
<organism>
    <name type="scientific">Xanthomonas axonopodis pv. citri (strain 306)</name>
    <dbReference type="NCBI Taxonomy" id="190486"/>
    <lineage>
        <taxon>Bacteria</taxon>
        <taxon>Pseudomonadati</taxon>
        <taxon>Pseudomonadota</taxon>
        <taxon>Gammaproteobacteria</taxon>
        <taxon>Lysobacterales</taxon>
        <taxon>Lysobacteraceae</taxon>
        <taxon>Xanthomonas</taxon>
    </lineage>
</organism>
<proteinExistence type="inferred from homology"/>
<comment type="function">
    <text evidence="1">Small subunit of the glutamine-dependent carbamoyl phosphate synthetase (CPSase). CPSase catalyzes the formation of carbamoyl phosphate from the ammonia moiety of glutamine, carbonate, and phosphate donated by ATP, constituting the first step of 2 biosynthetic pathways, one leading to arginine and/or urea and the other to pyrimidine nucleotides. The small subunit (glutamine amidotransferase) binds and cleaves glutamine to supply the large subunit with the substrate ammonia.</text>
</comment>
<comment type="catalytic activity">
    <reaction evidence="1">
        <text>hydrogencarbonate + L-glutamine + 2 ATP + H2O = carbamoyl phosphate + L-glutamate + 2 ADP + phosphate + 2 H(+)</text>
        <dbReference type="Rhea" id="RHEA:18633"/>
        <dbReference type="ChEBI" id="CHEBI:15377"/>
        <dbReference type="ChEBI" id="CHEBI:15378"/>
        <dbReference type="ChEBI" id="CHEBI:17544"/>
        <dbReference type="ChEBI" id="CHEBI:29985"/>
        <dbReference type="ChEBI" id="CHEBI:30616"/>
        <dbReference type="ChEBI" id="CHEBI:43474"/>
        <dbReference type="ChEBI" id="CHEBI:58228"/>
        <dbReference type="ChEBI" id="CHEBI:58359"/>
        <dbReference type="ChEBI" id="CHEBI:456216"/>
        <dbReference type="EC" id="6.3.5.5"/>
    </reaction>
</comment>
<comment type="catalytic activity">
    <molecule>Carbamoyl phosphate synthase small chain</molecule>
    <reaction evidence="1">
        <text>L-glutamine + H2O = L-glutamate + NH4(+)</text>
        <dbReference type="Rhea" id="RHEA:15889"/>
        <dbReference type="ChEBI" id="CHEBI:15377"/>
        <dbReference type="ChEBI" id="CHEBI:28938"/>
        <dbReference type="ChEBI" id="CHEBI:29985"/>
        <dbReference type="ChEBI" id="CHEBI:58359"/>
    </reaction>
</comment>
<comment type="pathway">
    <text evidence="1">Amino-acid biosynthesis; L-arginine biosynthesis; carbamoyl phosphate from bicarbonate: step 1/1.</text>
</comment>
<comment type="pathway">
    <text evidence="1">Pyrimidine metabolism; UMP biosynthesis via de novo pathway; (S)-dihydroorotate from bicarbonate: step 1/3.</text>
</comment>
<comment type="subunit">
    <text evidence="1">Composed of two chains; the small (or glutamine) chain promotes the hydrolysis of glutamine to ammonia, which is used by the large (or ammonia) chain to synthesize carbamoyl phosphate. Tetramer of heterodimers (alpha,beta)4.</text>
</comment>
<comment type="similarity">
    <text evidence="1">Belongs to the CarA family.</text>
</comment>
<protein>
    <recommendedName>
        <fullName evidence="1">Carbamoyl phosphate synthase small chain</fullName>
        <ecNumber evidence="1">6.3.5.5</ecNumber>
    </recommendedName>
    <alternativeName>
        <fullName evidence="1">Carbamoyl phosphate synthetase glutamine chain</fullName>
    </alternativeName>
</protein>
<accession>P58895</accession>
<name>CARA_XANAC</name>
<keyword id="KW-0028">Amino-acid biosynthesis</keyword>
<keyword id="KW-0055">Arginine biosynthesis</keyword>
<keyword id="KW-0067">ATP-binding</keyword>
<keyword id="KW-0315">Glutamine amidotransferase</keyword>
<keyword id="KW-0436">Ligase</keyword>
<keyword id="KW-0547">Nucleotide-binding</keyword>
<keyword id="KW-0665">Pyrimidine biosynthesis</keyword>
<feature type="chain" id="PRO_0000112348" description="Carbamoyl phosphate synthase small chain">
    <location>
        <begin position="1"/>
        <end position="391"/>
    </location>
</feature>
<feature type="domain" description="Glutamine amidotransferase type-1" evidence="1">
    <location>
        <begin position="206"/>
        <end position="391"/>
    </location>
</feature>
<feature type="region of interest" description="CPSase" evidence="1">
    <location>
        <begin position="1"/>
        <end position="202"/>
    </location>
</feature>
<feature type="active site" description="Nucleophile" evidence="1">
    <location>
        <position position="282"/>
    </location>
</feature>
<feature type="active site" evidence="1">
    <location>
        <position position="366"/>
    </location>
</feature>
<feature type="active site" evidence="1">
    <location>
        <position position="368"/>
    </location>
</feature>
<feature type="binding site" evidence="1">
    <location>
        <position position="47"/>
    </location>
    <ligand>
        <name>L-glutamine</name>
        <dbReference type="ChEBI" id="CHEBI:58359"/>
    </ligand>
</feature>
<feature type="binding site" evidence="1">
    <location>
        <position position="254"/>
    </location>
    <ligand>
        <name>L-glutamine</name>
        <dbReference type="ChEBI" id="CHEBI:58359"/>
    </ligand>
</feature>
<feature type="binding site" evidence="1">
    <location>
        <position position="256"/>
    </location>
    <ligand>
        <name>L-glutamine</name>
        <dbReference type="ChEBI" id="CHEBI:58359"/>
    </ligand>
</feature>
<feature type="binding site" evidence="1">
    <location>
        <position position="283"/>
    </location>
    <ligand>
        <name>L-glutamine</name>
        <dbReference type="ChEBI" id="CHEBI:58359"/>
    </ligand>
</feature>
<feature type="binding site" evidence="1">
    <location>
        <position position="286"/>
    </location>
    <ligand>
        <name>L-glutamine</name>
        <dbReference type="ChEBI" id="CHEBI:58359"/>
    </ligand>
</feature>
<feature type="binding site" evidence="1">
    <location>
        <position position="324"/>
    </location>
    <ligand>
        <name>L-glutamine</name>
        <dbReference type="ChEBI" id="CHEBI:58359"/>
    </ligand>
</feature>
<feature type="binding site" evidence="1">
    <location>
        <position position="326"/>
    </location>
    <ligand>
        <name>L-glutamine</name>
        <dbReference type="ChEBI" id="CHEBI:58359"/>
    </ligand>
</feature>
<feature type="binding site" evidence="1">
    <location>
        <position position="327"/>
    </location>
    <ligand>
        <name>L-glutamine</name>
        <dbReference type="ChEBI" id="CHEBI:58359"/>
    </ligand>
</feature>
<reference key="1">
    <citation type="journal article" date="2002" name="Nature">
        <title>Comparison of the genomes of two Xanthomonas pathogens with differing host specificities.</title>
        <authorList>
            <person name="da Silva A.C.R."/>
            <person name="Ferro J.A."/>
            <person name="Reinach F.C."/>
            <person name="Farah C.S."/>
            <person name="Furlan L.R."/>
            <person name="Quaggio R.B."/>
            <person name="Monteiro-Vitorello C.B."/>
            <person name="Van Sluys M.A."/>
            <person name="Almeida N.F. Jr."/>
            <person name="Alves L.M.C."/>
            <person name="do Amaral A.M."/>
            <person name="Bertolini M.C."/>
            <person name="Camargo L.E.A."/>
            <person name="Camarotte G."/>
            <person name="Cannavan F."/>
            <person name="Cardozo J."/>
            <person name="Chambergo F."/>
            <person name="Ciapina L.P."/>
            <person name="Cicarelli R.M.B."/>
            <person name="Coutinho L.L."/>
            <person name="Cursino-Santos J.R."/>
            <person name="El-Dorry H."/>
            <person name="Faria J.B."/>
            <person name="Ferreira A.J.S."/>
            <person name="Ferreira R.C.C."/>
            <person name="Ferro M.I.T."/>
            <person name="Formighieri E.F."/>
            <person name="Franco M.C."/>
            <person name="Greggio C.C."/>
            <person name="Gruber A."/>
            <person name="Katsuyama A.M."/>
            <person name="Kishi L.T."/>
            <person name="Leite R.P."/>
            <person name="Lemos E.G.M."/>
            <person name="Lemos M.V.F."/>
            <person name="Locali E.C."/>
            <person name="Machado M.A."/>
            <person name="Madeira A.M.B.N."/>
            <person name="Martinez-Rossi N.M."/>
            <person name="Martins E.C."/>
            <person name="Meidanis J."/>
            <person name="Menck C.F.M."/>
            <person name="Miyaki C.Y."/>
            <person name="Moon D.H."/>
            <person name="Moreira L.M."/>
            <person name="Novo M.T.M."/>
            <person name="Okura V.K."/>
            <person name="Oliveira M.C."/>
            <person name="Oliveira V.R."/>
            <person name="Pereira H.A."/>
            <person name="Rossi A."/>
            <person name="Sena J.A.D."/>
            <person name="Silva C."/>
            <person name="de Souza R.F."/>
            <person name="Spinola L.A.F."/>
            <person name="Takita M.A."/>
            <person name="Tamura R.E."/>
            <person name="Teixeira E.C."/>
            <person name="Tezza R.I.D."/>
            <person name="Trindade dos Santos M."/>
            <person name="Truffi D."/>
            <person name="Tsai S.M."/>
            <person name="White F.F."/>
            <person name="Setubal J.C."/>
            <person name="Kitajima J.P."/>
        </authorList>
    </citation>
    <scope>NUCLEOTIDE SEQUENCE [LARGE SCALE GENOMIC DNA]</scope>
    <source>
        <strain>306</strain>
    </source>
</reference>
<sequence>MTQPAILVLEDGTVFEGESVGANGLSVGEVVFNTAMTGYQEVLTDPSYARQMVTLTYPHIGNTGFTDQDDEARKIWAAGLIVRDVPRRPSNWRSQVALPEWLQARGVVAISGIDTRKLTRLLRQKGAQNGALMAGDIDVEKALEAARKFPGLKGMDLAKVVSTESTYNWKEGSLDLNSDSFLGLGALNIGKSAHASAGSGEELAFKVVAYDYGVKLNILRMLAERGCDVTVVPARTPVAEVLALQPDGVFLSNGPGDPEPCDYAIDAIKELIAQKVPTFGICLGHQLLALAAGAKTLKMTTGHHGANHPVQDLDGGRVMITSQNHGFAVDESTLPANVRVTHRSLFDGTNQGIALTDAPAFSFQGHPEASPGPRDVGPLFDRFVDLMAARA</sequence>
<dbReference type="EC" id="6.3.5.5" evidence="1"/>
<dbReference type="EMBL" id="AE008923">
    <property type="protein sequence ID" value="AAM36723.1"/>
    <property type="molecule type" value="Genomic_DNA"/>
</dbReference>
<dbReference type="RefSeq" id="WP_011051188.1">
    <property type="nucleotide sequence ID" value="NC_003919.1"/>
</dbReference>
<dbReference type="SMR" id="P58895"/>
<dbReference type="MEROPS" id="C26.954"/>
<dbReference type="GeneID" id="66911007"/>
<dbReference type="KEGG" id="xac:XAC1861"/>
<dbReference type="eggNOG" id="COG0505">
    <property type="taxonomic scope" value="Bacteria"/>
</dbReference>
<dbReference type="HOGENOM" id="CLU_035901_2_1_6"/>
<dbReference type="UniPathway" id="UPA00068">
    <property type="reaction ID" value="UER00171"/>
</dbReference>
<dbReference type="UniPathway" id="UPA00070">
    <property type="reaction ID" value="UER00115"/>
</dbReference>
<dbReference type="Proteomes" id="UP000000576">
    <property type="component" value="Chromosome"/>
</dbReference>
<dbReference type="GO" id="GO:0005524">
    <property type="term" value="F:ATP binding"/>
    <property type="evidence" value="ECO:0007669"/>
    <property type="project" value="UniProtKB-UniRule"/>
</dbReference>
<dbReference type="GO" id="GO:0004088">
    <property type="term" value="F:carbamoyl-phosphate synthase (glutamine-hydrolyzing) activity"/>
    <property type="evidence" value="ECO:0007669"/>
    <property type="project" value="UniProtKB-UniRule"/>
</dbReference>
<dbReference type="GO" id="GO:0004359">
    <property type="term" value="F:glutaminase activity"/>
    <property type="evidence" value="ECO:0007669"/>
    <property type="project" value="RHEA"/>
</dbReference>
<dbReference type="GO" id="GO:0006207">
    <property type="term" value="P:'de novo' pyrimidine nucleobase biosynthetic process"/>
    <property type="evidence" value="ECO:0007669"/>
    <property type="project" value="InterPro"/>
</dbReference>
<dbReference type="GO" id="GO:0044205">
    <property type="term" value="P:'de novo' UMP biosynthetic process"/>
    <property type="evidence" value="ECO:0007669"/>
    <property type="project" value="UniProtKB-UniRule"/>
</dbReference>
<dbReference type="GO" id="GO:0006541">
    <property type="term" value="P:glutamine metabolic process"/>
    <property type="evidence" value="ECO:0007669"/>
    <property type="project" value="InterPro"/>
</dbReference>
<dbReference type="GO" id="GO:0006526">
    <property type="term" value="P:L-arginine biosynthetic process"/>
    <property type="evidence" value="ECO:0007669"/>
    <property type="project" value="UniProtKB-UniRule"/>
</dbReference>
<dbReference type="CDD" id="cd01744">
    <property type="entry name" value="GATase1_CPSase"/>
    <property type="match status" value="1"/>
</dbReference>
<dbReference type="FunFam" id="3.40.50.880:FF:000011">
    <property type="entry name" value="Carbamoyl-phosphate synthase small chain"/>
    <property type="match status" value="1"/>
</dbReference>
<dbReference type="FunFam" id="3.50.30.20:FF:000001">
    <property type="entry name" value="Carbamoyl-phosphate synthase small chain"/>
    <property type="match status" value="1"/>
</dbReference>
<dbReference type="Gene3D" id="3.40.50.880">
    <property type="match status" value="1"/>
</dbReference>
<dbReference type="Gene3D" id="3.50.30.20">
    <property type="entry name" value="Carbamoyl-phosphate synthase small subunit, N-terminal domain"/>
    <property type="match status" value="1"/>
</dbReference>
<dbReference type="HAMAP" id="MF_01209">
    <property type="entry name" value="CPSase_S_chain"/>
    <property type="match status" value="1"/>
</dbReference>
<dbReference type="InterPro" id="IPR050472">
    <property type="entry name" value="Anth_synth/Amidotransfase"/>
</dbReference>
<dbReference type="InterPro" id="IPR006274">
    <property type="entry name" value="CarbamoylP_synth_ssu"/>
</dbReference>
<dbReference type="InterPro" id="IPR002474">
    <property type="entry name" value="CarbamoylP_synth_ssu_N"/>
</dbReference>
<dbReference type="InterPro" id="IPR036480">
    <property type="entry name" value="CarbP_synth_ssu_N_sf"/>
</dbReference>
<dbReference type="InterPro" id="IPR029062">
    <property type="entry name" value="Class_I_gatase-like"/>
</dbReference>
<dbReference type="InterPro" id="IPR035686">
    <property type="entry name" value="CPSase_GATase1"/>
</dbReference>
<dbReference type="InterPro" id="IPR017926">
    <property type="entry name" value="GATASE"/>
</dbReference>
<dbReference type="NCBIfam" id="TIGR01368">
    <property type="entry name" value="CPSaseIIsmall"/>
    <property type="match status" value="1"/>
</dbReference>
<dbReference type="NCBIfam" id="NF009475">
    <property type="entry name" value="PRK12838.1"/>
    <property type="match status" value="1"/>
</dbReference>
<dbReference type="PANTHER" id="PTHR43418:SF7">
    <property type="entry name" value="CARBAMOYL-PHOSPHATE SYNTHASE SMALL CHAIN"/>
    <property type="match status" value="1"/>
</dbReference>
<dbReference type="PANTHER" id="PTHR43418">
    <property type="entry name" value="MULTIFUNCTIONAL TRYPTOPHAN BIOSYNTHESIS PROTEIN-RELATED"/>
    <property type="match status" value="1"/>
</dbReference>
<dbReference type="Pfam" id="PF00988">
    <property type="entry name" value="CPSase_sm_chain"/>
    <property type="match status" value="1"/>
</dbReference>
<dbReference type="Pfam" id="PF00117">
    <property type="entry name" value="GATase"/>
    <property type="match status" value="1"/>
</dbReference>
<dbReference type="PRINTS" id="PR00099">
    <property type="entry name" value="CPSGATASE"/>
</dbReference>
<dbReference type="PRINTS" id="PR00096">
    <property type="entry name" value="GATASE"/>
</dbReference>
<dbReference type="SMART" id="SM01097">
    <property type="entry name" value="CPSase_sm_chain"/>
    <property type="match status" value="1"/>
</dbReference>
<dbReference type="SUPFAM" id="SSF52021">
    <property type="entry name" value="Carbamoyl phosphate synthetase, small subunit N-terminal domain"/>
    <property type="match status" value="1"/>
</dbReference>
<dbReference type="SUPFAM" id="SSF52317">
    <property type="entry name" value="Class I glutamine amidotransferase-like"/>
    <property type="match status" value="1"/>
</dbReference>
<dbReference type="PROSITE" id="PS51273">
    <property type="entry name" value="GATASE_TYPE_1"/>
    <property type="match status" value="1"/>
</dbReference>
<gene>
    <name evidence="1" type="primary">carA</name>
    <name type="ordered locus">XAC1861</name>
</gene>